<sequence>MAEHDLTSKMGCFLDRHLVFPLLEFLSVKEIYDEHELLKGKLDLLSNTNMVDFAMDVYKGLYPDEEVPTSLVEKRVEVVKELKDLQAQTEPIINCFSDPEFTAQVQSTRDGRQLFEYLERNHDIKPEMLDVLYKFAKFQYECGNYSGAAEYLYFYRALAPGGDTNSLNALWGKLASEILMQNWDTALEDLNRLKDVIESNTSAGTLQLLQERTWLIHWSLFVFFNHPKGRDLIIDLILYQPQYLNAIQTMCPHILRYLTTAVITNKRRRPVLKDLVKVIQQESYTYRDPITEFLECLYVNFDFDGAQKKLRECETVLLNDFFLVACRDDFIENARLFIFETFCRIHQCISISMLAEKLNMTPEEAERWIVNLIRNAKLDAKIDSKLGHVVMGVQAPSVYQQVIEKTKNLQYKTQVLAGNIEKKLTQDKGGYDAYGGSWNAYEPGFLAH</sequence>
<feature type="chain" id="PRO_0000365975" description="Eukaryotic translation initiation factor 3 subunit E">
    <location>
        <begin position="1"/>
        <end position="448"/>
    </location>
</feature>
<feature type="domain" description="PCI" evidence="2">
    <location>
        <begin position="225"/>
        <end position="396"/>
    </location>
</feature>
<organism>
    <name type="scientific">Nematostella vectensis</name>
    <name type="common">Starlet sea anemone</name>
    <dbReference type="NCBI Taxonomy" id="45351"/>
    <lineage>
        <taxon>Eukaryota</taxon>
        <taxon>Metazoa</taxon>
        <taxon>Cnidaria</taxon>
        <taxon>Anthozoa</taxon>
        <taxon>Hexacorallia</taxon>
        <taxon>Actiniaria</taxon>
        <taxon>Edwardsiidae</taxon>
        <taxon>Nematostella</taxon>
    </lineage>
</organism>
<name>EIF3E_NEMVE</name>
<proteinExistence type="inferred from homology"/>
<gene>
    <name type="ORF">v1g163572</name>
</gene>
<evidence type="ECO:0000255" key="1">
    <source>
        <dbReference type="HAMAP-Rule" id="MF_03004"/>
    </source>
</evidence>
<evidence type="ECO:0000255" key="2">
    <source>
        <dbReference type="PROSITE-ProRule" id="PRU01185"/>
    </source>
</evidence>
<comment type="function">
    <text evidence="1">Component of the eukaryotic translation initiation factor 3 (eIF-3) complex, which is involved in protein synthesis of a specialized repertoire of mRNAs and, together with other initiation factors, stimulates binding of mRNA and methionyl-tRNAi to the 40S ribosome. The eIF-3 complex specifically targets and initiates translation of a subset of mRNAs involved in cell proliferation.</text>
</comment>
<comment type="subunit">
    <text evidence="1">Component of the eukaryotic translation initiation factor 3 (eIF-3) complex.</text>
</comment>
<comment type="subcellular location">
    <subcellularLocation>
        <location evidence="1">Cytoplasm</location>
    </subcellularLocation>
</comment>
<comment type="similarity">
    <text evidence="1">Belongs to the eIF-3 subunit E family.</text>
</comment>
<keyword id="KW-0963">Cytoplasm</keyword>
<keyword id="KW-0396">Initiation factor</keyword>
<keyword id="KW-0648">Protein biosynthesis</keyword>
<keyword id="KW-1185">Reference proteome</keyword>
<protein>
    <recommendedName>
        <fullName evidence="1">Eukaryotic translation initiation factor 3 subunit E</fullName>
        <shortName evidence="1">eIF3e</shortName>
    </recommendedName>
    <alternativeName>
        <fullName evidence="1">Eukaryotic translation initiation factor 3 subunit 6</fullName>
    </alternativeName>
</protein>
<reference key="1">
    <citation type="journal article" date="2007" name="Science">
        <title>Sea anemone genome reveals ancestral eumetazoan gene repertoire and genomic organization.</title>
        <authorList>
            <person name="Putnam N.H."/>
            <person name="Srivastava M."/>
            <person name="Hellsten U."/>
            <person name="Dirks B."/>
            <person name="Chapman J."/>
            <person name="Salamov A."/>
            <person name="Terry A."/>
            <person name="Shapiro H."/>
            <person name="Lindquist E."/>
            <person name="Kapitonov V.V."/>
            <person name="Jurka J."/>
            <person name="Genikhovich G."/>
            <person name="Grigoriev I.V."/>
            <person name="Lucas S.M."/>
            <person name="Steele R.E."/>
            <person name="Finnerty J.R."/>
            <person name="Technau U."/>
            <person name="Martindale M.Q."/>
            <person name="Rokhsar D.S."/>
        </authorList>
    </citation>
    <scope>NUCLEOTIDE SEQUENCE [LARGE SCALE GENOMIC DNA]</scope>
    <source>
        <strain>CH2 X CH6</strain>
    </source>
</reference>
<dbReference type="EMBL" id="DS469547">
    <property type="protein sequence ID" value="EDO44203.1"/>
    <property type="molecule type" value="Genomic_DNA"/>
</dbReference>
<dbReference type="SMR" id="A7RWP6"/>
<dbReference type="FunCoup" id="A7RWP6">
    <property type="interactions" value="912"/>
</dbReference>
<dbReference type="STRING" id="45351.A7RWP6"/>
<dbReference type="EnsemblMetazoa" id="EDO44203">
    <property type="protein sequence ID" value="EDO44203"/>
    <property type="gene ID" value="NEMVEDRAFT_v1g163572"/>
</dbReference>
<dbReference type="KEGG" id="nve:5516169"/>
<dbReference type="eggNOG" id="KOG2758">
    <property type="taxonomic scope" value="Eukaryota"/>
</dbReference>
<dbReference type="HOGENOM" id="CLU_031132_0_0_1"/>
<dbReference type="InParanoid" id="A7RWP6"/>
<dbReference type="OMA" id="NCPWILR"/>
<dbReference type="OrthoDB" id="417252at2759"/>
<dbReference type="PhylomeDB" id="A7RWP6"/>
<dbReference type="Proteomes" id="UP000001593">
    <property type="component" value="Unassembled WGS sequence"/>
</dbReference>
<dbReference type="GO" id="GO:0016282">
    <property type="term" value="C:eukaryotic 43S preinitiation complex"/>
    <property type="evidence" value="ECO:0007669"/>
    <property type="project" value="UniProtKB-UniRule"/>
</dbReference>
<dbReference type="GO" id="GO:0033290">
    <property type="term" value="C:eukaryotic 48S preinitiation complex"/>
    <property type="evidence" value="ECO:0007669"/>
    <property type="project" value="UniProtKB-UniRule"/>
</dbReference>
<dbReference type="GO" id="GO:0005852">
    <property type="term" value="C:eukaryotic translation initiation factor 3 complex"/>
    <property type="evidence" value="ECO:0000318"/>
    <property type="project" value="GO_Central"/>
</dbReference>
<dbReference type="GO" id="GO:0071540">
    <property type="term" value="C:eukaryotic translation initiation factor 3 complex, eIF3e"/>
    <property type="evidence" value="ECO:0007669"/>
    <property type="project" value="UniProtKB-UniRule"/>
</dbReference>
<dbReference type="GO" id="GO:0005634">
    <property type="term" value="C:nucleus"/>
    <property type="evidence" value="ECO:0000318"/>
    <property type="project" value="GO_Central"/>
</dbReference>
<dbReference type="GO" id="GO:0003743">
    <property type="term" value="F:translation initiation factor activity"/>
    <property type="evidence" value="ECO:0007669"/>
    <property type="project" value="UniProtKB-UniRule"/>
</dbReference>
<dbReference type="GO" id="GO:0001732">
    <property type="term" value="P:formation of cytoplasmic translation initiation complex"/>
    <property type="evidence" value="ECO:0007669"/>
    <property type="project" value="UniProtKB-UniRule"/>
</dbReference>
<dbReference type="GO" id="GO:0006413">
    <property type="term" value="P:translational initiation"/>
    <property type="evidence" value="ECO:0000318"/>
    <property type="project" value="GO_Central"/>
</dbReference>
<dbReference type="CDD" id="cd21378">
    <property type="entry name" value="eIF3E"/>
    <property type="match status" value="1"/>
</dbReference>
<dbReference type="Gene3D" id="1.25.40.570">
    <property type="match status" value="1"/>
</dbReference>
<dbReference type="HAMAP" id="MF_03004">
    <property type="entry name" value="eIF3e"/>
    <property type="match status" value="1"/>
</dbReference>
<dbReference type="InterPro" id="IPR016650">
    <property type="entry name" value="eIF3e"/>
</dbReference>
<dbReference type="InterPro" id="IPR019010">
    <property type="entry name" value="eIF3e_N"/>
</dbReference>
<dbReference type="InterPro" id="IPR000717">
    <property type="entry name" value="PCI_dom"/>
</dbReference>
<dbReference type="InterPro" id="IPR036390">
    <property type="entry name" value="WH_DNA-bd_sf"/>
</dbReference>
<dbReference type="PANTHER" id="PTHR10317">
    <property type="entry name" value="EUKARYOTIC TRANSLATION INITIATION FACTOR 3 SUBUNIT E"/>
    <property type="match status" value="1"/>
</dbReference>
<dbReference type="Pfam" id="PF09440">
    <property type="entry name" value="eIF3_N"/>
    <property type="match status" value="1"/>
</dbReference>
<dbReference type="Pfam" id="PF21357">
    <property type="entry name" value="EIF3E_C"/>
    <property type="match status" value="1"/>
</dbReference>
<dbReference type="Pfam" id="PF01399">
    <property type="entry name" value="PCI"/>
    <property type="match status" value="1"/>
</dbReference>
<dbReference type="PIRSF" id="PIRSF016255">
    <property type="entry name" value="eIF3e_su6"/>
    <property type="match status" value="1"/>
</dbReference>
<dbReference type="SMART" id="SM01186">
    <property type="entry name" value="eIF3_N"/>
    <property type="match status" value="1"/>
</dbReference>
<dbReference type="SMART" id="SM00088">
    <property type="entry name" value="PINT"/>
    <property type="match status" value="1"/>
</dbReference>
<dbReference type="SUPFAM" id="SSF46785">
    <property type="entry name" value="Winged helix' DNA-binding domain"/>
    <property type="match status" value="1"/>
</dbReference>
<dbReference type="PROSITE" id="PS50250">
    <property type="entry name" value="PCI"/>
    <property type="match status" value="1"/>
</dbReference>
<accession>A7RWP6</accession>